<reference key="1">
    <citation type="journal article" date="2015" name="Microbiology">
        <title>Genome of Methanoregula boonei 6A8 reveals adaptations to oligotrophic peatland environments.</title>
        <authorList>
            <person name="Braeuer S."/>
            <person name="Cadillo-Quiroz H."/>
            <person name="Kyrpides N."/>
            <person name="Woyke T."/>
            <person name="Goodwin L."/>
            <person name="Detter C."/>
            <person name="Podell S."/>
            <person name="Yavitt J.B."/>
            <person name="Zinder S.H."/>
        </authorList>
    </citation>
    <scope>NUCLEOTIDE SEQUENCE [LARGE SCALE GENOMIC DNA]</scope>
    <source>
        <strain>DSM 21154 / JCM 14090 / 6A8</strain>
    </source>
</reference>
<evidence type="ECO:0000255" key="1">
    <source>
        <dbReference type="HAMAP-Rule" id="MF_00087"/>
    </source>
</evidence>
<name>HEM1_METB6</name>
<accession>A7I7P5</accession>
<protein>
    <recommendedName>
        <fullName evidence="1">Glutamyl-tRNA reductase</fullName>
        <shortName evidence="1">GluTR</shortName>
        <ecNumber evidence="1">1.2.1.70</ecNumber>
    </recommendedName>
</protein>
<dbReference type="EC" id="1.2.1.70" evidence="1"/>
<dbReference type="EMBL" id="CP000780">
    <property type="protein sequence ID" value="ABS55756.1"/>
    <property type="molecule type" value="Genomic_DNA"/>
</dbReference>
<dbReference type="RefSeq" id="WP_012106787.1">
    <property type="nucleotide sequence ID" value="NC_009712.1"/>
</dbReference>
<dbReference type="SMR" id="A7I7P5"/>
<dbReference type="STRING" id="456442.Mboo_1238"/>
<dbReference type="GeneID" id="5409922"/>
<dbReference type="KEGG" id="mbn:Mboo_1238"/>
<dbReference type="eggNOG" id="arCOG01036">
    <property type="taxonomic scope" value="Archaea"/>
</dbReference>
<dbReference type="HOGENOM" id="CLU_035113_0_0_2"/>
<dbReference type="OrthoDB" id="4562at2157"/>
<dbReference type="UniPathway" id="UPA00251">
    <property type="reaction ID" value="UER00316"/>
</dbReference>
<dbReference type="Proteomes" id="UP000002408">
    <property type="component" value="Chromosome"/>
</dbReference>
<dbReference type="GO" id="GO:0008883">
    <property type="term" value="F:glutamyl-tRNA reductase activity"/>
    <property type="evidence" value="ECO:0007669"/>
    <property type="project" value="UniProtKB-UniRule"/>
</dbReference>
<dbReference type="GO" id="GO:0050661">
    <property type="term" value="F:NADP binding"/>
    <property type="evidence" value="ECO:0007669"/>
    <property type="project" value="InterPro"/>
</dbReference>
<dbReference type="GO" id="GO:0019353">
    <property type="term" value="P:protoporphyrinogen IX biosynthetic process from glutamate"/>
    <property type="evidence" value="ECO:0007669"/>
    <property type="project" value="TreeGrafter"/>
</dbReference>
<dbReference type="CDD" id="cd05213">
    <property type="entry name" value="NAD_bind_Glutamyl_tRNA_reduct"/>
    <property type="match status" value="1"/>
</dbReference>
<dbReference type="FunFam" id="3.40.50.720:FF:000031">
    <property type="entry name" value="Glutamyl-tRNA reductase"/>
    <property type="match status" value="1"/>
</dbReference>
<dbReference type="Gene3D" id="3.30.460.30">
    <property type="entry name" value="Glutamyl-tRNA reductase, N-terminal domain"/>
    <property type="match status" value="1"/>
</dbReference>
<dbReference type="Gene3D" id="3.40.50.720">
    <property type="entry name" value="NAD(P)-binding Rossmann-like Domain"/>
    <property type="match status" value="1"/>
</dbReference>
<dbReference type="HAMAP" id="MF_00087">
    <property type="entry name" value="Glu_tRNA_reductase"/>
    <property type="match status" value="1"/>
</dbReference>
<dbReference type="InterPro" id="IPR000343">
    <property type="entry name" value="4pyrrol_synth_GluRdtase"/>
</dbReference>
<dbReference type="InterPro" id="IPR015896">
    <property type="entry name" value="4pyrrol_synth_GluRdtase_dimer"/>
</dbReference>
<dbReference type="InterPro" id="IPR015895">
    <property type="entry name" value="4pyrrol_synth_GluRdtase_N"/>
</dbReference>
<dbReference type="InterPro" id="IPR018214">
    <property type="entry name" value="GluRdtase_CS"/>
</dbReference>
<dbReference type="InterPro" id="IPR036453">
    <property type="entry name" value="GluRdtase_dimer_dom_sf"/>
</dbReference>
<dbReference type="InterPro" id="IPR036343">
    <property type="entry name" value="GluRdtase_N_sf"/>
</dbReference>
<dbReference type="InterPro" id="IPR036291">
    <property type="entry name" value="NAD(P)-bd_dom_sf"/>
</dbReference>
<dbReference type="InterPro" id="IPR006151">
    <property type="entry name" value="Shikm_DH/Glu-tRNA_Rdtase"/>
</dbReference>
<dbReference type="NCBIfam" id="TIGR01035">
    <property type="entry name" value="hemA"/>
    <property type="match status" value="1"/>
</dbReference>
<dbReference type="PANTHER" id="PTHR43013">
    <property type="entry name" value="GLUTAMYL-TRNA REDUCTASE"/>
    <property type="match status" value="1"/>
</dbReference>
<dbReference type="PANTHER" id="PTHR43013:SF1">
    <property type="entry name" value="GLUTAMYL-TRNA REDUCTASE"/>
    <property type="match status" value="1"/>
</dbReference>
<dbReference type="Pfam" id="PF00745">
    <property type="entry name" value="GlutR_dimer"/>
    <property type="match status" value="1"/>
</dbReference>
<dbReference type="Pfam" id="PF05201">
    <property type="entry name" value="GlutR_N"/>
    <property type="match status" value="1"/>
</dbReference>
<dbReference type="Pfam" id="PF01488">
    <property type="entry name" value="Shikimate_DH"/>
    <property type="match status" value="1"/>
</dbReference>
<dbReference type="PIRSF" id="PIRSF000445">
    <property type="entry name" value="4pyrrol_synth_GluRdtase"/>
    <property type="match status" value="1"/>
</dbReference>
<dbReference type="SUPFAM" id="SSF69742">
    <property type="entry name" value="Glutamyl tRNA-reductase catalytic, N-terminal domain"/>
    <property type="match status" value="1"/>
</dbReference>
<dbReference type="SUPFAM" id="SSF69075">
    <property type="entry name" value="Glutamyl tRNA-reductase dimerization domain"/>
    <property type="match status" value="1"/>
</dbReference>
<dbReference type="SUPFAM" id="SSF51735">
    <property type="entry name" value="NAD(P)-binding Rossmann-fold domains"/>
    <property type="match status" value="1"/>
</dbReference>
<dbReference type="PROSITE" id="PS00747">
    <property type="entry name" value="GLUTR"/>
    <property type="match status" value="1"/>
</dbReference>
<comment type="function">
    <text evidence="1">Catalyzes the NADPH-dependent reduction of glutamyl-tRNA(Glu) to glutamate 1-semialdehyde (GSA).</text>
</comment>
<comment type="catalytic activity">
    <reaction evidence="1">
        <text>(S)-4-amino-5-oxopentanoate + tRNA(Glu) + NADP(+) = L-glutamyl-tRNA(Glu) + NADPH + H(+)</text>
        <dbReference type="Rhea" id="RHEA:12344"/>
        <dbReference type="Rhea" id="RHEA-COMP:9663"/>
        <dbReference type="Rhea" id="RHEA-COMP:9680"/>
        <dbReference type="ChEBI" id="CHEBI:15378"/>
        <dbReference type="ChEBI" id="CHEBI:57501"/>
        <dbReference type="ChEBI" id="CHEBI:57783"/>
        <dbReference type="ChEBI" id="CHEBI:58349"/>
        <dbReference type="ChEBI" id="CHEBI:78442"/>
        <dbReference type="ChEBI" id="CHEBI:78520"/>
        <dbReference type="EC" id="1.2.1.70"/>
    </reaction>
</comment>
<comment type="pathway">
    <text evidence="1">Porphyrin-containing compound metabolism; protoporphyrin-IX biosynthesis; 5-aminolevulinate from L-glutamyl-tRNA(Glu): step 1/2.</text>
</comment>
<comment type="subunit">
    <text evidence="1">Homodimer.</text>
</comment>
<comment type="domain">
    <text evidence="1">Possesses an unusual extended V-shaped dimeric structure with each monomer consisting of three distinct domains arranged along a curved 'spinal' alpha-helix. The N-terminal catalytic domain specifically recognizes the glutamate moiety of the substrate. The second domain is the NADPH-binding domain, and the third C-terminal domain is responsible for dimerization.</text>
</comment>
<comment type="miscellaneous">
    <text evidence="1">During catalysis, the active site Cys acts as a nucleophile attacking the alpha-carbonyl group of tRNA-bound glutamate with the formation of a thioester intermediate between enzyme and glutamate, and the concomitant release of tRNA(Glu). The thioester intermediate is finally reduced by direct hydride transfer from NADPH, to form the product GSA.</text>
</comment>
<comment type="similarity">
    <text evidence="1">Belongs to the glutamyl-tRNA reductase family.</text>
</comment>
<feature type="chain" id="PRO_0000335093" description="Glutamyl-tRNA reductase">
    <location>
        <begin position="1"/>
        <end position="424"/>
    </location>
</feature>
<feature type="active site" description="Nucleophile" evidence="1">
    <location>
        <position position="51"/>
    </location>
</feature>
<feature type="binding site" evidence="1">
    <location>
        <begin position="50"/>
        <end position="53"/>
    </location>
    <ligand>
        <name>substrate</name>
    </ligand>
</feature>
<feature type="binding site" evidence="1">
    <location>
        <position position="98"/>
    </location>
    <ligand>
        <name>substrate</name>
    </ligand>
</feature>
<feature type="binding site" evidence="1">
    <location>
        <begin position="103"/>
        <end position="105"/>
    </location>
    <ligand>
        <name>substrate</name>
    </ligand>
</feature>
<feature type="binding site" evidence="1">
    <location>
        <position position="109"/>
    </location>
    <ligand>
        <name>substrate</name>
    </ligand>
</feature>
<feature type="binding site" evidence="1">
    <location>
        <begin position="178"/>
        <end position="183"/>
    </location>
    <ligand>
        <name>NADP(+)</name>
        <dbReference type="ChEBI" id="CHEBI:58349"/>
    </ligand>
</feature>
<feature type="site" description="Important for activity" evidence="1">
    <location>
        <position position="88"/>
    </location>
</feature>
<sequence length="424" mass="45887">MSKHPSRFAVAGVSHHTADVLALEAFRFGDEPAFLAAAQKKFAGALLLQTCNRVEVIVEGDAASLRDFLESQERKGFFLLEGREALRHLFSLAAGIDSMIVGEDQIIGQLKKSLADGEAACTASPFLSLCINKAVHVGVGVRRTTKINRGAVSVGSAAVLLAESELGTLEGRHILVVGSGEMGLLVAQALAAKHLTAMYVANRTFGRAVILAEKIGGVAVRMNELYHYITLSDVVISCTSAPHPVIHKTALKEAMRDRCWPVEGHPRPLILVDIAQPRDVEEGAGAIDGVRLFTIDDLRQVNEQTMSTRRAEAERAAEYVDDELDLFIRQLHRKSADDCIAALHTWAEAVRVRERDRALARLGNMDERTAGVIDDLSRVLTKKILTDATASIRACAEEGDRDAAEALVRALTRGSAADSREGTE</sequence>
<gene>
    <name evidence="1" type="primary">hemA</name>
    <name type="ordered locus">Mboo_1238</name>
</gene>
<proteinExistence type="inferred from homology"/>
<organism>
    <name type="scientific">Methanoregula boonei (strain DSM 21154 / JCM 14090 / 6A8)</name>
    <dbReference type="NCBI Taxonomy" id="456442"/>
    <lineage>
        <taxon>Archaea</taxon>
        <taxon>Methanobacteriati</taxon>
        <taxon>Methanobacteriota</taxon>
        <taxon>Stenosarchaea group</taxon>
        <taxon>Methanomicrobia</taxon>
        <taxon>Methanomicrobiales</taxon>
        <taxon>Methanoregulaceae</taxon>
        <taxon>Methanoregula</taxon>
    </lineage>
</organism>
<keyword id="KW-0521">NADP</keyword>
<keyword id="KW-0560">Oxidoreductase</keyword>
<keyword id="KW-0627">Porphyrin biosynthesis</keyword>
<keyword id="KW-1185">Reference proteome</keyword>